<protein>
    <recommendedName>
        <fullName evidence="1">Ribosomal protein uL3 glutamine methyltransferase</fullName>
        <shortName evidence="1">uL3 MTase</shortName>
        <ecNumber evidence="1">2.1.1.298</ecNumber>
    </recommendedName>
    <alternativeName>
        <fullName evidence="1">N5-glutamine methyltransferase PrmB</fullName>
    </alternativeName>
</protein>
<feature type="chain" id="PRO_0000414183" description="Ribosomal protein uL3 glutamine methyltransferase">
    <location>
        <begin position="1"/>
        <end position="310"/>
    </location>
</feature>
<name>PRMB_ALIF1</name>
<organism>
    <name type="scientific">Aliivibrio fischeri (strain ATCC 700601 / ES114)</name>
    <name type="common">Vibrio fischeri</name>
    <dbReference type="NCBI Taxonomy" id="312309"/>
    <lineage>
        <taxon>Bacteria</taxon>
        <taxon>Pseudomonadati</taxon>
        <taxon>Pseudomonadota</taxon>
        <taxon>Gammaproteobacteria</taxon>
        <taxon>Vibrionales</taxon>
        <taxon>Vibrionaceae</taxon>
        <taxon>Aliivibrio</taxon>
    </lineage>
</organism>
<gene>
    <name evidence="1" type="primary">prmB</name>
    <name type="ordered locus">VF_1806</name>
</gene>
<sequence length="310" mass="35327">MDKIFVEEAVAELHTLQDMLRWTVSRFNAAGLFYGHGTDNAWDEAVQLVLPTLYLPIDVPAHVRESRLTSTERLRIVERVVRRINERIPTAYLTNKAWFCGLEFFVDERVLVPRSPIAELIETQFEPWLTEEPTRIMDLCTGSGCIAIACAHAFPNAEVDAIDISTDALMVAEQNVQDHGMEQQVFPIRSDLLRDIPKDQYNFIVSNPPYVDEEDMNSLPEEFEHEPELGLAAGTDGLKLVRRILANAPDYLMDNGFLICEVGNSMVHMMEQYPDIPFTWIEFAEGGHGVFMLTKQQLLDCADEFALYRD</sequence>
<reference key="1">
    <citation type="journal article" date="2005" name="Proc. Natl. Acad. Sci. U.S.A.">
        <title>Complete genome sequence of Vibrio fischeri: a symbiotic bacterium with pathogenic congeners.</title>
        <authorList>
            <person name="Ruby E.G."/>
            <person name="Urbanowski M."/>
            <person name="Campbell J."/>
            <person name="Dunn A."/>
            <person name="Faini M."/>
            <person name="Gunsalus R."/>
            <person name="Lostroh P."/>
            <person name="Lupp C."/>
            <person name="McCann J."/>
            <person name="Millikan D."/>
            <person name="Schaefer A."/>
            <person name="Stabb E."/>
            <person name="Stevens A."/>
            <person name="Visick K."/>
            <person name="Whistler C."/>
            <person name="Greenberg E.P."/>
        </authorList>
    </citation>
    <scope>NUCLEOTIDE SEQUENCE [LARGE SCALE GENOMIC DNA]</scope>
    <source>
        <strain>ATCC 700601 / ES114</strain>
    </source>
</reference>
<evidence type="ECO:0000255" key="1">
    <source>
        <dbReference type="HAMAP-Rule" id="MF_02125"/>
    </source>
</evidence>
<proteinExistence type="inferred from homology"/>
<accession>Q5E3U5</accession>
<keyword id="KW-0489">Methyltransferase</keyword>
<keyword id="KW-1185">Reference proteome</keyword>
<keyword id="KW-0949">S-adenosyl-L-methionine</keyword>
<keyword id="KW-0808">Transferase</keyword>
<comment type="function">
    <text evidence="1">Methylates large ribosomal subunit protein uL3 on a specific glutamine residue.</text>
</comment>
<comment type="catalytic activity">
    <reaction evidence="1">
        <text>L-glutaminyl-[ribosomal protein uL3] + S-adenosyl-L-methionine = N(5)-methyl-L-glutaminyl-[ribosomal protein uL3] + S-adenosyl-L-homocysteine + H(+)</text>
        <dbReference type="Rhea" id="RHEA:45020"/>
        <dbReference type="Rhea" id="RHEA-COMP:11063"/>
        <dbReference type="Rhea" id="RHEA-COMP:11064"/>
        <dbReference type="ChEBI" id="CHEBI:15378"/>
        <dbReference type="ChEBI" id="CHEBI:30011"/>
        <dbReference type="ChEBI" id="CHEBI:57856"/>
        <dbReference type="ChEBI" id="CHEBI:59789"/>
        <dbReference type="ChEBI" id="CHEBI:61891"/>
        <dbReference type="EC" id="2.1.1.298"/>
    </reaction>
</comment>
<comment type="similarity">
    <text evidence="1">Belongs to the protein N5-glutamine methyltransferase family. PrmB subfamily.</text>
</comment>
<dbReference type="EC" id="2.1.1.298" evidence="1"/>
<dbReference type="EMBL" id="CP000020">
    <property type="protein sequence ID" value="AAW86301.1"/>
    <property type="molecule type" value="Genomic_DNA"/>
</dbReference>
<dbReference type="RefSeq" id="WP_005420259.1">
    <property type="nucleotide sequence ID" value="NZ_CAWLES010000001.1"/>
</dbReference>
<dbReference type="RefSeq" id="YP_205189.1">
    <property type="nucleotide sequence ID" value="NC_006840.2"/>
</dbReference>
<dbReference type="SMR" id="Q5E3U5"/>
<dbReference type="STRING" id="312309.VF_1806"/>
<dbReference type="EnsemblBacteria" id="AAW86301">
    <property type="protein sequence ID" value="AAW86301"/>
    <property type="gene ID" value="VF_1806"/>
</dbReference>
<dbReference type="GeneID" id="54164507"/>
<dbReference type="KEGG" id="vfi:VF_1806"/>
<dbReference type="PATRIC" id="fig|312309.11.peg.1834"/>
<dbReference type="eggNOG" id="COG2890">
    <property type="taxonomic scope" value="Bacteria"/>
</dbReference>
<dbReference type="HOGENOM" id="CLU_018398_5_1_6"/>
<dbReference type="OrthoDB" id="9800643at2"/>
<dbReference type="Proteomes" id="UP000000537">
    <property type="component" value="Chromosome I"/>
</dbReference>
<dbReference type="GO" id="GO:0005829">
    <property type="term" value="C:cytosol"/>
    <property type="evidence" value="ECO:0007669"/>
    <property type="project" value="TreeGrafter"/>
</dbReference>
<dbReference type="GO" id="GO:0003676">
    <property type="term" value="F:nucleic acid binding"/>
    <property type="evidence" value="ECO:0007669"/>
    <property type="project" value="InterPro"/>
</dbReference>
<dbReference type="GO" id="GO:0036009">
    <property type="term" value="F:protein-glutamine N-methyltransferase activity"/>
    <property type="evidence" value="ECO:0007669"/>
    <property type="project" value="UniProtKB-UniRule"/>
</dbReference>
<dbReference type="GO" id="GO:0032259">
    <property type="term" value="P:methylation"/>
    <property type="evidence" value="ECO:0007669"/>
    <property type="project" value="UniProtKB-KW"/>
</dbReference>
<dbReference type="CDD" id="cd02440">
    <property type="entry name" value="AdoMet_MTases"/>
    <property type="match status" value="1"/>
</dbReference>
<dbReference type="FunFam" id="1.10.8.10:FF:000022">
    <property type="entry name" value="50S ribosomal protein L3 glutamine methyltransferase"/>
    <property type="match status" value="1"/>
</dbReference>
<dbReference type="FunFam" id="3.40.50.150:FF:000042">
    <property type="entry name" value="50S ribosomal protein L3 glutamine methyltransferase"/>
    <property type="match status" value="1"/>
</dbReference>
<dbReference type="Gene3D" id="1.10.8.10">
    <property type="entry name" value="DNA helicase RuvA subunit, C-terminal domain"/>
    <property type="match status" value="1"/>
</dbReference>
<dbReference type="Gene3D" id="3.40.50.150">
    <property type="entry name" value="Vaccinia Virus protein VP39"/>
    <property type="match status" value="1"/>
</dbReference>
<dbReference type="HAMAP" id="MF_02125">
    <property type="entry name" value="L3_methyltr_PrmB"/>
    <property type="match status" value="1"/>
</dbReference>
<dbReference type="InterPro" id="IPR002052">
    <property type="entry name" value="DNA_methylase_N6_adenine_CS"/>
</dbReference>
<dbReference type="InterPro" id="IPR004556">
    <property type="entry name" value="HemK-like"/>
</dbReference>
<dbReference type="InterPro" id="IPR017127">
    <property type="entry name" value="Ribosome_uL3_MTase"/>
</dbReference>
<dbReference type="InterPro" id="IPR029063">
    <property type="entry name" value="SAM-dependent_MTases_sf"/>
</dbReference>
<dbReference type="InterPro" id="IPR007848">
    <property type="entry name" value="Small_mtfrase_dom"/>
</dbReference>
<dbReference type="NCBIfam" id="TIGR00536">
    <property type="entry name" value="hemK_fam"/>
    <property type="match status" value="1"/>
</dbReference>
<dbReference type="NCBIfam" id="TIGR03533">
    <property type="entry name" value="L3_gln_methyl"/>
    <property type="match status" value="1"/>
</dbReference>
<dbReference type="PANTHER" id="PTHR47806">
    <property type="entry name" value="50S RIBOSOMAL PROTEIN L3 GLUTAMINE METHYLTRANSFERASE"/>
    <property type="match status" value="1"/>
</dbReference>
<dbReference type="PANTHER" id="PTHR47806:SF1">
    <property type="entry name" value="RIBOSOMAL PROTEIN UL3 GLUTAMINE METHYLTRANSFERASE"/>
    <property type="match status" value="1"/>
</dbReference>
<dbReference type="Pfam" id="PF05175">
    <property type="entry name" value="MTS"/>
    <property type="match status" value="1"/>
</dbReference>
<dbReference type="PIRSF" id="PIRSF037167">
    <property type="entry name" value="Mtase_YfcB_prd"/>
    <property type="match status" value="1"/>
</dbReference>
<dbReference type="SUPFAM" id="SSF53335">
    <property type="entry name" value="S-adenosyl-L-methionine-dependent methyltransferases"/>
    <property type="match status" value="1"/>
</dbReference>